<sequence length="382" mass="40676">MSDTKVYRASTTAPVNIAVVKYWGKRDAKLNLPTNSSLSVTLSQDDLRTLTTASCSSTFTDGDSLTLNGESSDISGARTQACFRELRSRRAALEQADSSLPKLSSYPLKIVSENNFPTAAGLASSAAGFAALVQAIAFLYELPDSPSDLSLIARQGSGSACRSLFGGYVAWRMGEKEDGSDSKADLVAPASHWPEMRALILVASAAKKGVSSTSGMQQTVATSGLFKERITNVVPANMALMEEAIKDKDFPKFAEVTMRESNSFHATCADTYPPIFYMNDISRAAIRAVECINEKVGRTVAAYTFDAGPNCVIYYEEKDADIIVGAFYQALQGVGGFKEGAASARSSIEFDATLASTLKEGVSRVISTGVGEGPVKTDEFLA</sequence>
<evidence type="ECO:0000250" key="1">
    <source>
        <dbReference type="UniProtKB" id="O23722"/>
    </source>
</evidence>
<evidence type="ECO:0000250" key="2">
    <source>
        <dbReference type="UniProtKB" id="P32377"/>
    </source>
</evidence>
<evidence type="ECO:0000269" key="3">
    <source>
    </source>
</evidence>
<evidence type="ECO:0000303" key="4">
    <source>
    </source>
</evidence>
<evidence type="ECO:0000305" key="5"/>
<evidence type="ECO:0000305" key="6">
    <source>
    </source>
</evidence>
<dbReference type="EC" id="4.1.1.33" evidence="6"/>
<dbReference type="EMBL" id="HG970332">
    <property type="protein sequence ID" value="CEF75839.1"/>
    <property type="molecule type" value="Genomic_DNA"/>
</dbReference>
<dbReference type="RefSeq" id="XP_011319398.1">
    <property type="nucleotide sequence ID" value="XM_011321096.1"/>
</dbReference>
<dbReference type="SMR" id="I1S130"/>
<dbReference type="FunCoup" id="I1S130">
    <property type="interactions" value="691"/>
</dbReference>
<dbReference type="STRING" id="229533.I1S130"/>
<dbReference type="KEGG" id="fgr:FGSG_10424"/>
<dbReference type="VEuPathDB" id="FungiDB:FGRAMPH1_01G08071"/>
<dbReference type="eggNOG" id="KOG2833">
    <property type="taxonomic scope" value="Eukaryota"/>
</dbReference>
<dbReference type="HOGENOM" id="CLU_040369_4_2_1"/>
<dbReference type="InParanoid" id="I1S130"/>
<dbReference type="OrthoDB" id="107518at110618"/>
<dbReference type="UniPathway" id="UPA00057">
    <property type="reaction ID" value="UER00100"/>
</dbReference>
<dbReference type="Proteomes" id="UP000070720">
    <property type="component" value="Chromosome 1"/>
</dbReference>
<dbReference type="GO" id="GO:0005829">
    <property type="term" value="C:cytosol"/>
    <property type="evidence" value="ECO:0007669"/>
    <property type="project" value="InterPro"/>
</dbReference>
<dbReference type="GO" id="GO:0005524">
    <property type="term" value="F:ATP binding"/>
    <property type="evidence" value="ECO:0007669"/>
    <property type="project" value="UniProtKB-KW"/>
</dbReference>
<dbReference type="GO" id="GO:0004163">
    <property type="term" value="F:diphosphomevalonate decarboxylase activity"/>
    <property type="evidence" value="ECO:0007669"/>
    <property type="project" value="UniProtKB-EC"/>
</dbReference>
<dbReference type="GO" id="GO:0019287">
    <property type="term" value="P:isopentenyl diphosphate biosynthetic process, mevalonate pathway"/>
    <property type="evidence" value="ECO:0007669"/>
    <property type="project" value="UniProtKB-UniPathway"/>
</dbReference>
<dbReference type="GO" id="GO:0016126">
    <property type="term" value="P:sterol biosynthetic process"/>
    <property type="evidence" value="ECO:0007669"/>
    <property type="project" value="UniProtKB-KW"/>
</dbReference>
<dbReference type="FunFam" id="3.30.230.10:FF:000018">
    <property type="entry name" value="Diphosphomevalonate decarboxylase"/>
    <property type="match status" value="1"/>
</dbReference>
<dbReference type="FunFam" id="3.30.70.890:FF:000005">
    <property type="entry name" value="Diphosphomevalonate decarboxylase"/>
    <property type="match status" value="1"/>
</dbReference>
<dbReference type="Gene3D" id="3.30.230.10">
    <property type="match status" value="1"/>
</dbReference>
<dbReference type="Gene3D" id="3.30.70.890">
    <property type="entry name" value="GHMP kinase, C-terminal domain"/>
    <property type="match status" value="1"/>
</dbReference>
<dbReference type="InterPro" id="IPR036554">
    <property type="entry name" value="GHMP_kinase_C_sf"/>
</dbReference>
<dbReference type="InterPro" id="IPR005935">
    <property type="entry name" value="Mev_decarb"/>
</dbReference>
<dbReference type="InterPro" id="IPR029765">
    <property type="entry name" value="Mev_diP_decarb"/>
</dbReference>
<dbReference type="InterPro" id="IPR053859">
    <property type="entry name" value="MVD-like_N"/>
</dbReference>
<dbReference type="InterPro" id="IPR041431">
    <property type="entry name" value="Mvd1_C"/>
</dbReference>
<dbReference type="InterPro" id="IPR020568">
    <property type="entry name" value="Ribosomal_Su5_D2-typ_SF"/>
</dbReference>
<dbReference type="InterPro" id="IPR014721">
    <property type="entry name" value="Ribsml_uS5_D2-typ_fold_subgr"/>
</dbReference>
<dbReference type="NCBIfam" id="TIGR01240">
    <property type="entry name" value="mevDPdecarb"/>
    <property type="match status" value="1"/>
</dbReference>
<dbReference type="PANTHER" id="PTHR10977">
    <property type="entry name" value="DIPHOSPHOMEVALONATE DECARBOXYLASE"/>
    <property type="match status" value="1"/>
</dbReference>
<dbReference type="PANTHER" id="PTHR10977:SF3">
    <property type="entry name" value="DIPHOSPHOMEVALONATE DECARBOXYLASE"/>
    <property type="match status" value="1"/>
</dbReference>
<dbReference type="Pfam" id="PF18376">
    <property type="entry name" value="MDD_C"/>
    <property type="match status" value="1"/>
</dbReference>
<dbReference type="Pfam" id="PF22700">
    <property type="entry name" value="MVD-like_N"/>
    <property type="match status" value="1"/>
</dbReference>
<dbReference type="PIRSF" id="PIRSF015950">
    <property type="entry name" value="Mev_P_decrbx"/>
    <property type="match status" value="1"/>
</dbReference>
<dbReference type="SUPFAM" id="SSF55060">
    <property type="entry name" value="GHMP Kinase, C-terminal domain"/>
    <property type="match status" value="1"/>
</dbReference>
<dbReference type="SUPFAM" id="SSF54211">
    <property type="entry name" value="Ribosomal protein S5 domain 2-like"/>
    <property type="match status" value="1"/>
</dbReference>
<gene>
    <name evidence="4" type="primary">ERG19</name>
    <name type="ORF">FG10424</name>
    <name type="ORF">FGRAMPH1_01T08071</name>
</gene>
<comment type="function">
    <text evidence="2 6">Diphosphomevalonate decarboxylase; part of the second module of ergosterol biosynthesis pathway that includes the middle steps of the pathway (By similarity). MVD1 converts diphosphomevalonate into isopentenyl diphosphate (By similarity). The second module is carried out in the vacuole and involves the formation of farnesyl diphosphate, which is also an important intermediate in the biosynthesis of ubiquinone, dolichol, heme and prenylated proteins. Activity by the mevalonate kinase ERG12 (FG05912) first converts mevalonate into 5-phosphomevalonate. 5-phosphomevalonate is then further converted to 5-diphosphomevalonate by the phosphomevalonate kinase ERG8 (FG09764). The diphosphomevalonate decarboxylase ERG19 (FG10424) then produces isopentenyl diphosphate. The isopentenyl-diphosphate delta-isomerase IDI1 (FG09722) then catalyzes the 1,3-allylic rearrangement of the homoallylic substrate isopentenyl (IPP) to its highly electrophilic allylic isomer, dimethylallyl diphosphate (DMAPP). Finally the farnesyl diphosphate synthase ERG20 (FG06784) catalyzes the sequential condensation of isopentenyl pyrophosphate with dimethylallyl pyrophosphate, and then with the resultant geranylpyrophosphate to the ultimate product farnesyl pyrophosphate (Probable).</text>
</comment>
<comment type="catalytic activity">
    <reaction evidence="6">
        <text>(R)-5-diphosphomevalonate + ATP = isopentenyl diphosphate + ADP + phosphate + CO2</text>
        <dbReference type="Rhea" id="RHEA:23732"/>
        <dbReference type="ChEBI" id="CHEBI:16526"/>
        <dbReference type="ChEBI" id="CHEBI:30616"/>
        <dbReference type="ChEBI" id="CHEBI:43474"/>
        <dbReference type="ChEBI" id="CHEBI:57557"/>
        <dbReference type="ChEBI" id="CHEBI:128769"/>
        <dbReference type="ChEBI" id="CHEBI:456216"/>
        <dbReference type="EC" id="4.1.1.33"/>
    </reaction>
    <physiologicalReaction direction="left-to-right" evidence="6">
        <dbReference type="Rhea" id="RHEA:23733"/>
    </physiologicalReaction>
</comment>
<comment type="pathway">
    <text evidence="6">Isoprenoid biosynthesis; isopentenyl diphosphate biosynthesis via mevalonate pathway; isopentenyl diphosphate from (R)-mevalonate: step 3/3.</text>
</comment>
<comment type="subunit">
    <text evidence="2">Homodimer.</text>
</comment>
<comment type="induction">
    <text evidence="3">Expression is regulated by the Zn(2)-C6 fungal-type transcription factor FgSR which binds directly to the promoter.</text>
</comment>
<comment type="similarity">
    <text evidence="5">Belongs to the diphosphomevalonate decarboxylase family.</text>
</comment>
<name>MVD1_GIBZE</name>
<proteinExistence type="evidence at transcript level"/>
<reference key="1">
    <citation type="journal article" date="2007" name="Science">
        <title>The Fusarium graminearum genome reveals a link between localized polymorphism and pathogen specialization.</title>
        <authorList>
            <person name="Cuomo C.A."/>
            <person name="Gueldener U."/>
            <person name="Xu J.-R."/>
            <person name="Trail F."/>
            <person name="Turgeon B.G."/>
            <person name="Di Pietro A."/>
            <person name="Walton J.D."/>
            <person name="Ma L.-J."/>
            <person name="Baker S.E."/>
            <person name="Rep M."/>
            <person name="Adam G."/>
            <person name="Antoniw J."/>
            <person name="Baldwin T."/>
            <person name="Calvo S.E."/>
            <person name="Chang Y.-L."/>
            <person name="DeCaprio D."/>
            <person name="Gale L.R."/>
            <person name="Gnerre S."/>
            <person name="Goswami R.S."/>
            <person name="Hammond-Kosack K."/>
            <person name="Harris L.J."/>
            <person name="Hilburn K."/>
            <person name="Kennell J.C."/>
            <person name="Kroken S."/>
            <person name="Magnuson J.K."/>
            <person name="Mannhaupt G."/>
            <person name="Mauceli E.W."/>
            <person name="Mewes H.-W."/>
            <person name="Mitterbauer R."/>
            <person name="Muehlbauer G."/>
            <person name="Muensterkoetter M."/>
            <person name="Nelson D."/>
            <person name="O'Donnell K."/>
            <person name="Ouellet T."/>
            <person name="Qi W."/>
            <person name="Quesneville H."/>
            <person name="Roncero M.I.G."/>
            <person name="Seong K.-Y."/>
            <person name="Tetko I.V."/>
            <person name="Urban M."/>
            <person name="Waalwijk C."/>
            <person name="Ward T.J."/>
            <person name="Yao J."/>
            <person name="Birren B.W."/>
            <person name="Kistler H.C."/>
        </authorList>
    </citation>
    <scope>NUCLEOTIDE SEQUENCE [LARGE SCALE GENOMIC DNA]</scope>
    <source>
        <strain>ATCC MYA-4620 / CBS 123657 / FGSC 9075 / NRRL 31084 / PH-1</strain>
    </source>
</reference>
<reference key="2">
    <citation type="journal article" date="2010" name="Nature">
        <title>Comparative genomics reveals mobile pathogenicity chromosomes in Fusarium.</title>
        <authorList>
            <person name="Ma L.-J."/>
            <person name="van der Does H.C."/>
            <person name="Borkovich K.A."/>
            <person name="Coleman J.J."/>
            <person name="Daboussi M.-J."/>
            <person name="Di Pietro A."/>
            <person name="Dufresne M."/>
            <person name="Freitag M."/>
            <person name="Grabherr M."/>
            <person name="Henrissat B."/>
            <person name="Houterman P.M."/>
            <person name="Kang S."/>
            <person name="Shim W.-B."/>
            <person name="Woloshuk C."/>
            <person name="Xie X."/>
            <person name="Xu J.-R."/>
            <person name="Antoniw J."/>
            <person name="Baker S.E."/>
            <person name="Bluhm B.H."/>
            <person name="Breakspear A."/>
            <person name="Brown D.W."/>
            <person name="Butchko R.A.E."/>
            <person name="Chapman S."/>
            <person name="Coulson R."/>
            <person name="Coutinho P.M."/>
            <person name="Danchin E.G.J."/>
            <person name="Diener A."/>
            <person name="Gale L.R."/>
            <person name="Gardiner D.M."/>
            <person name="Goff S."/>
            <person name="Hammond-Kosack K.E."/>
            <person name="Hilburn K."/>
            <person name="Hua-Van A."/>
            <person name="Jonkers W."/>
            <person name="Kazan K."/>
            <person name="Kodira C.D."/>
            <person name="Koehrsen M."/>
            <person name="Kumar L."/>
            <person name="Lee Y.-H."/>
            <person name="Li L."/>
            <person name="Manners J.M."/>
            <person name="Miranda-Saavedra D."/>
            <person name="Mukherjee M."/>
            <person name="Park G."/>
            <person name="Park J."/>
            <person name="Park S.-Y."/>
            <person name="Proctor R.H."/>
            <person name="Regev A."/>
            <person name="Ruiz-Roldan M.C."/>
            <person name="Sain D."/>
            <person name="Sakthikumar S."/>
            <person name="Sykes S."/>
            <person name="Schwartz D.C."/>
            <person name="Turgeon B.G."/>
            <person name="Wapinski I."/>
            <person name="Yoder O."/>
            <person name="Young S."/>
            <person name="Zeng Q."/>
            <person name="Zhou S."/>
            <person name="Galagan J."/>
            <person name="Cuomo C.A."/>
            <person name="Kistler H.C."/>
            <person name="Rep M."/>
        </authorList>
    </citation>
    <scope>GENOME REANNOTATION</scope>
    <source>
        <strain>ATCC MYA-4620 / CBS 123657 / FGSC 9075 / NRRL 31084 / PH-1</strain>
    </source>
</reference>
<reference key="3">
    <citation type="journal article" date="2015" name="BMC Genomics">
        <title>The completed genome sequence of the pathogenic ascomycete fungus Fusarium graminearum.</title>
        <authorList>
            <person name="King R."/>
            <person name="Urban M."/>
            <person name="Hammond-Kosack M.C.U."/>
            <person name="Hassani-Pak K."/>
            <person name="Hammond-Kosack K.E."/>
        </authorList>
    </citation>
    <scope>NUCLEOTIDE SEQUENCE [LARGE SCALE GENOMIC DNA]</scope>
    <source>
        <strain>ATCC MYA-4620 / CBS 123657 / FGSC 9075 / NRRL 31084 / PH-1</strain>
    </source>
</reference>
<reference key="4">
    <citation type="journal article" date="2019" name="Nat. Commun.">
        <title>A phosphorylated transcription factor regulates sterol biosynthesis in Fusarium graminearum.</title>
        <authorList>
            <person name="Liu Z."/>
            <person name="Jian Y."/>
            <person name="Chen Y."/>
            <person name="Kistler H.C."/>
            <person name="He P."/>
            <person name="Ma Z."/>
            <person name="Yin Y."/>
        </authorList>
    </citation>
    <scope>FUNCTION</scope>
    <scope>INDUCTION</scope>
</reference>
<keyword id="KW-0067">ATP-binding</keyword>
<keyword id="KW-0444">Lipid biosynthesis</keyword>
<keyword id="KW-0443">Lipid metabolism</keyword>
<keyword id="KW-0456">Lyase</keyword>
<keyword id="KW-0547">Nucleotide-binding</keyword>
<keyword id="KW-1185">Reference proteome</keyword>
<keyword id="KW-0752">Steroid biosynthesis</keyword>
<keyword id="KW-0753">Steroid metabolism</keyword>
<keyword id="KW-0756">Sterol biosynthesis</keyword>
<keyword id="KW-1207">Sterol metabolism</keyword>
<accession>I1S130</accession>
<organism>
    <name type="scientific">Gibberella zeae (strain ATCC MYA-4620 / CBS 123657 / FGSC 9075 / NRRL 31084 / PH-1)</name>
    <name type="common">Wheat head blight fungus</name>
    <name type="synonym">Fusarium graminearum</name>
    <dbReference type="NCBI Taxonomy" id="229533"/>
    <lineage>
        <taxon>Eukaryota</taxon>
        <taxon>Fungi</taxon>
        <taxon>Dikarya</taxon>
        <taxon>Ascomycota</taxon>
        <taxon>Pezizomycotina</taxon>
        <taxon>Sordariomycetes</taxon>
        <taxon>Hypocreomycetidae</taxon>
        <taxon>Hypocreales</taxon>
        <taxon>Nectriaceae</taxon>
        <taxon>Fusarium</taxon>
    </lineage>
</organism>
<feature type="chain" id="PRO_0000454675" description="Diphosphomevalonate decarboxylase ERG19">
    <location>
        <begin position="1"/>
        <end position="382"/>
    </location>
</feature>
<feature type="binding site" evidence="1">
    <location>
        <begin position="22"/>
        <end position="25"/>
    </location>
    <ligand>
        <name>(R)-5-diphosphomevalonate</name>
        <dbReference type="ChEBI" id="CHEBI:57557"/>
    </ligand>
</feature>
<feature type="binding site" evidence="1">
    <location>
        <position position="78"/>
    </location>
    <ligand>
        <name>(R)-5-diphosphomevalonate</name>
        <dbReference type="ChEBI" id="CHEBI:57557"/>
    </ligand>
</feature>
<feature type="binding site" evidence="1">
    <location>
        <begin position="157"/>
        <end position="162"/>
    </location>
    <ligand>
        <name>(R)-5-diphosphomevalonate</name>
        <dbReference type="ChEBI" id="CHEBI:57557"/>
    </ligand>
</feature>
<feature type="binding site" evidence="1">
    <location>
        <position position="213"/>
    </location>
    <ligand>
        <name>(R)-5-diphosphomevalonate</name>
        <dbReference type="ChEBI" id="CHEBI:57557"/>
    </ligand>
</feature>
<protein>
    <recommendedName>
        <fullName evidence="4">Diphosphomevalonate decarboxylase ERG19</fullName>
        <ecNumber evidence="6">4.1.1.33</ecNumber>
    </recommendedName>
    <alternativeName>
        <fullName evidence="4">Ergosterol biosynthesis protein 19</fullName>
    </alternativeName>
    <alternativeName>
        <fullName evidence="4">Mevalonate pyrophosphate decarboxylase ERG19</fullName>
    </alternativeName>
    <alternativeName>
        <fullName evidence="5">Mevalonate-5-diphosphate decarboxylase ERG19</fullName>
        <shortName evidence="5">MDDase</shortName>
    </alternativeName>
</protein>